<comment type="function">
    <text evidence="1">Catalyzes a trans-dehydration via an enolate intermediate.</text>
</comment>
<comment type="catalytic activity">
    <reaction evidence="1">
        <text>3-dehydroquinate = 3-dehydroshikimate + H2O</text>
        <dbReference type="Rhea" id="RHEA:21096"/>
        <dbReference type="ChEBI" id="CHEBI:15377"/>
        <dbReference type="ChEBI" id="CHEBI:16630"/>
        <dbReference type="ChEBI" id="CHEBI:32364"/>
        <dbReference type="EC" id="4.2.1.10"/>
    </reaction>
</comment>
<comment type="pathway">
    <text evidence="1">Metabolic intermediate biosynthesis; chorismate biosynthesis; chorismate from D-erythrose 4-phosphate and phosphoenolpyruvate: step 3/7.</text>
</comment>
<comment type="subunit">
    <text evidence="1">Homododecamer.</text>
</comment>
<comment type="similarity">
    <text evidence="1">Belongs to the type-II 3-dehydroquinase family.</text>
</comment>
<reference key="1">
    <citation type="submission" date="2006-05" db="EMBL/GenBank/DDBJ databases">
        <authorList>
            <consortium name="Genoscope"/>
        </authorList>
    </citation>
    <scope>NUCLEOTIDE SEQUENCE [LARGE SCALE GENOMIC DNA]</scope>
    <source>
        <strain>WH7803</strain>
    </source>
</reference>
<keyword id="KW-0028">Amino-acid biosynthesis</keyword>
<keyword id="KW-0057">Aromatic amino acid biosynthesis</keyword>
<keyword id="KW-0456">Lyase</keyword>
<keyword id="KW-1185">Reference proteome</keyword>
<proteinExistence type="inferred from homology"/>
<gene>
    <name evidence="1" type="primary">aroQ</name>
    <name type="ordered locus">SynWH7803_0549</name>
</gene>
<evidence type="ECO:0000255" key="1">
    <source>
        <dbReference type="HAMAP-Rule" id="MF_00169"/>
    </source>
</evidence>
<name>AROQ_SYNPW</name>
<protein>
    <recommendedName>
        <fullName evidence="1">3-dehydroquinate dehydratase</fullName>
        <shortName evidence="1">3-dehydroquinase</shortName>
        <ecNumber evidence="1">4.2.1.10</ecNumber>
    </recommendedName>
    <alternativeName>
        <fullName evidence="1">Type II DHQase</fullName>
    </alternativeName>
</protein>
<feature type="chain" id="PRO_1000023523" description="3-dehydroquinate dehydratase">
    <location>
        <begin position="1"/>
        <end position="147"/>
    </location>
</feature>
<feature type="active site" description="Proton acceptor" evidence="1">
    <location>
        <position position="22"/>
    </location>
</feature>
<feature type="active site" description="Proton donor" evidence="1">
    <location>
        <position position="99"/>
    </location>
</feature>
<feature type="binding site" evidence="1">
    <location>
        <position position="73"/>
    </location>
    <ligand>
        <name>substrate</name>
    </ligand>
</feature>
<feature type="binding site" evidence="1">
    <location>
        <position position="79"/>
    </location>
    <ligand>
        <name>substrate</name>
    </ligand>
</feature>
<feature type="binding site" evidence="1">
    <location>
        <position position="86"/>
    </location>
    <ligand>
        <name>substrate</name>
    </ligand>
</feature>
<feature type="binding site" evidence="1">
    <location>
        <begin position="100"/>
        <end position="101"/>
    </location>
    <ligand>
        <name>substrate</name>
    </ligand>
</feature>
<feature type="binding site" evidence="1">
    <location>
        <position position="110"/>
    </location>
    <ligand>
        <name>substrate</name>
    </ligand>
</feature>
<feature type="site" description="Transition state stabilizer" evidence="1">
    <location>
        <position position="17"/>
    </location>
</feature>
<accession>A5GJ60</accession>
<dbReference type="EC" id="4.2.1.10" evidence="1"/>
<dbReference type="EMBL" id="CT971583">
    <property type="protein sequence ID" value="CAK22975.1"/>
    <property type="molecule type" value="Genomic_DNA"/>
</dbReference>
<dbReference type="SMR" id="A5GJ60"/>
<dbReference type="STRING" id="32051.SynWH7803_0549"/>
<dbReference type="KEGG" id="syx:SynWH7803_0549"/>
<dbReference type="eggNOG" id="COG0757">
    <property type="taxonomic scope" value="Bacteria"/>
</dbReference>
<dbReference type="HOGENOM" id="CLU_090968_1_0_3"/>
<dbReference type="OrthoDB" id="9790793at2"/>
<dbReference type="UniPathway" id="UPA00053">
    <property type="reaction ID" value="UER00086"/>
</dbReference>
<dbReference type="Proteomes" id="UP000001566">
    <property type="component" value="Chromosome"/>
</dbReference>
<dbReference type="GO" id="GO:0003855">
    <property type="term" value="F:3-dehydroquinate dehydratase activity"/>
    <property type="evidence" value="ECO:0007669"/>
    <property type="project" value="UniProtKB-UniRule"/>
</dbReference>
<dbReference type="GO" id="GO:0008652">
    <property type="term" value="P:amino acid biosynthetic process"/>
    <property type="evidence" value="ECO:0007669"/>
    <property type="project" value="UniProtKB-KW"/>
</dbReference>
<dbReference type="GO" id="GO:0009073">
    <property type="term" value="P:aromatic amino acid family biosynthetic process"/>
    <property type="evidence" value="ECO:0007669"/>
    <property type="project" value="UniProtKB-KW"/>
</dbReference>
<dbReference type="GO" id="GO:0009423">
    <property type="term" value="P:chorismate biosynthetic process"/>
    <property type="evidence" value="ECO:0007669"/>
    <property type="project" value="UniProtKB-UniRule"/>
</dbReference>
<dbReference type="GO" id="GO:0019631">
    <property type="term" value="P:quinate catabolic process"/>
    <property type="evidence" value="ECO:0007669"/>
    <property type="project" value="TreeGrafter"/>
</dbReference>
<dbReference type="CDD" id="cd00466">
    <property type="entry name" value="DHQase_II"/>
    <property type="match status" value="1"/>
</dbReference>
<dbReference type="Gene3D" id="3.40.50.9100">
    <property type="entry name" value="Dehydroquinase, class II"/>
    <property type="match status" value="1"/>
</dbReference>
<dbReference type="HAMAP" id="MF_00169">
    <property type="entry name" value="AroQ"/>
    <property type="match status" value="1"/>
</dbReference>
<dbReference type="InterPro" id="IPR001874">
    <property type="entry name" value="DHquinase_II"/>
</dbReference>
<dbReference type="InterPro" id="IPR018509">
    <property type="entry name" value="DHquinase_II_CS"/>
</dbReference>
<dbReference type="InterPro" id="IPR036441">
    <property type="entry name" value="DHquinase_II_sf"/>
</dbReference>
<dbReference type="NCBIfam" id="TIGR01088">
    <property type="entry name" value="aroQ"/>
    <property type="match status" value="1"/>
</dbReference>
<dbReference type="NCBIfam" id="NF003804">
    <property type="entry name" value="PRK05395.1-1"/>
    <property type="match status" value="1"/>
</dbReference>
<dbReference type="NCBIfam" id="NF003805">
    <property type="entry name" value="PRK05395.1-2"/>
    <property type="match status" value="1"/>
</dbReference>
<dbReference type="NCBIfam" id="NF003806">
    <property type="entry name" value="PRK05395.1-3"/>
    <property type="match status" value="1"/>
</dbReference>
<dbReference type="NCBIfam" id="NF003807">
    <property type="entry name" value="PRK05395.1-4"/>
    <property type="match status" value="1"/>
</dbReference>
<dbReference type="PANTHER" id="PTHR21272">
    <property type="entry name" value="CATABOLIC 3-DEHYDROQUINASE"/>
    <property type="match status" value="1"/>
</dbReference>
<dbReference type="PANTHER" id="PTHR21272:SF3">
    <property type="entry name" value="CATABOLIC 3-DEHYDROQUINASE"/>
    <property type="match status" value="1"/>
</dbReference>
<dbReference type="Pfam" id="PF01220">
    <property type="entry name" value="DHquinase_II"/>
    <property type="match status" value="1"/>
</dbReference>
<dbReference type="PIRSF" id="PIRSF001399">
    <property type="entry name" value="DHquinase_II"/>
    <property type="match status" value="1"/>
</dbReference>
<dbReference type="SUPFAM" id="SSF52304">
    <property type="entry name" value="Type II 3-dehydroquinate dehydratase"/>
    <property type="match status" value="1"/>
</dbReference>
<dbReference type="PROSITE" id="PS01029">
    <property type="entry name" value="DEHYDROQUINASE_II"/>
    <property type="match status" value="1"/>
</dbReference>
<sequence>MRLLLLNGPNINLLGQREPGLYGHQTLSDIELRLRDRASEAEVQLETFQSNFEGALVERVHQAMGSVDGILINAGAYTHTSIALRDALLGVAIPFVEVHLSNIHARESFRHHSHLADRALGVVCGFGAFSYDMAFDGLVNHLRGVEA</sequence>
<organism>
    <name type="scientific">Synechococcus sp. (strain WH7803)</name>
    <dbReference type="NCBI Taxonomy" id="32051"/>
    <lineage>
        <taxon>Bacteria</taxon>
        <taxon>Bacillati</taxon>
        <taxon>Cyanobacteriota</taxon>
        <taxon>Cyanophyceae</taxon>
        <taxon>Synechococcales</taxon>
        <taxon>Synechococcaceae</taxon>
        <taxon>Synechococcus</taxon>
    </lineage>
</organism>